<sequence>MALTVEQKAQIVKDFQRKEGDTGSSEVQVALLTFRINDLTPHFKANPKDHHSRRGLLKMVSQRRRLLAYLRRTQPDTYRALITRLGLRK</sequence>
<keyword id="KW-1185">Reference proteome</keyword>
<keyword id="KW-0687">Ribonucleoprotein</keyword>
<keyword id="KW-0689">Ribosomal protein</keyword>
<keyword id="KW-0694">RNA-binding</keyword>
<keyword id="KW-0699">rRNA-binding</keyword>
<feature type="chain" id="PRO_0000115487" description="Small ribosomal subunit protein uS15">
    <location>
        <begin position="1"/>
        <end position="89"/>
    </location>
</feature>
<proteinExistence type="inferred from homology"/>
<gene>
    <name evidence="1" type="primary">rpsO</name>
    <name type="ordered locus">NGO_0191</name>
</gene>
<protein>
    <recommendedName>
        <fullName evidence="1">Small ribosomal subunit protein uS15</fullName>
    </recommendedName>
    <alternativeName>
        <fullName evidence="2">30S ribosomal protein S15</fullName>
    </alternativeName>
</protein>
<dbReference type="EMBL" id="AE004969">
    <property type="protein sequence ID" value="AAW88946.1"/>
    <property type="molecule type" value="Genomic_DNA"/>
</dbReference>
<dbReference type="RefSeq" id="WP_002217790.1">
    <property type="nucleotide sequence ID" value="NC_002946.2"/>
</dbReference>
<dbReference type="RefSeq" id="YP_207358.1">
    <property type="nucleotide sequence ID" value="NC_002946.2"/>
</dbReference>
<dbReference type="SMR" id="Q5FA41"/>
<dbReference type="STRING" id="242231.NGO_0191"/>
<dbReference type="GeneID" id="93386561"/>
<dbReference type="KEGG" id="ngo:NGO_0191"/>
<dbReference type="PATRIC" id="fig|242231.10.peg.238"/>
<dbReference type="HOGENOM" id="CLU_148518_0_0_4"/>
<dbReference type="Proteomes" id="UP000000535">
    <property type="component" value="Chromosome"/>
</dbReference>
<dbReference type="GO" id="GO:0022627">
    <property type="term" value="C:cytosolic small ribosomal subunit"/>
    <property type="evidence" value="ECO:0007669"/>
    <property type="project" value="TreeGrafter"/>
</dbReference>
<dbReference type="GO" id="GO:0019843">
    <property type="term" value="F:rRNA binding"/>
    <property type="evidence" value="ECO:0007669"/>
    <property type="project" value="UniProtKB-UniRule"/>
</dbReference>
<dbReference type="GO" id="GO:0003735">
    <property type="term" value="F:structural constituent of ribosome"/>
    <property type="evidence" value="ECO:0007669"/>
    <property type="project" value="InterPro"/>
</dbReference>
<dbReference type="GO" id="GO:0006412">
    <property type="term" value="P:translation"/>
    <property type="evidence" value="ECO:0007669"/>
    <property type="project" value="UniProtKB-UniRule"/>
</dbReference>
<dbReference type="CDD" id="cd00353">
    <property type="entry name" value="Ribosomal_S15p_S13e"/>
    <property type="match status" value="1"/>
</dbReference>
<dbReference type="FunFam" id="1.10.287.10:FF:000002">
    <property type="entry name" value="30S ribosomal protein S15"/>
    <property type="match status" value="1"/>
</dbReference>
<dbReference type="Gene3D" id="6.10.250.3130">
    <property type="match status" value="1"/>
</dbReference>
<dbReference type="Gene3D" id="1.10.287.10">
    <property type="entry name" value="S15/NS1, RNA-binding"/>
    <property type="match status" value="1"/>
</dbReference>
<dbReference type="HAMAP" id="MF_01343_B">
    <property type="entry name" value="Ribosomal_uS15_B"/>
    <property type="match status" value="1"/>
</dbReference>
<dbReference type="InterPro" id="IPR000589">
    <property type="entry name" value="Ribosomal_uS15"/>
</dbReference>
<dbReference type="InterPro" id="IPR005290">
    <property type="entry name" value="Ribosomal_uS15_bac-type"/>
</dbReference>
<dbReference type="InterPro" id="IPR009068">
    <property type="entry name" value="uS15_NS1_RNA-bd_sf"/>
</dbReference>
<dbReference type="NCBIfam" id="TIGR00952">
    <property type="entry name" value="S15_bact"/>
    <property type="match status" value="1"/>
</dbReference>
<dbReference type="PANTHER" id="PTHR23321">
    <property type="entry name" value="RIBOSOMAL PROTEIN S15, BACTERIAL AND ORGANELLAR"/>
    <property type="match status" value="1"/>
</dbReference>
<dbReference type="PANTHER" id="PTHR23321:SF26">
    <property type="entry name" value="SMALL RIBOSOMAL SUBUNIT PROTEIN US15M"/>
    <property type="match status" value="1"/>
</dbReference>
<dbReference type="Pfam" id="PF00312">
    <property type="entry name" value="Ribosomal_S15"/>
    <property type="match status" value="1"/>
</dbReference>
<dbReference type="SMART" id="SM01387">
    <property type="entry name" value="Ribosomal_S15"/>
    <property type="match status" value="1"/>
</dbReference>
<dbReference type="SUPFAM" id="SSF47060">
    <property type="entry name" value="S15/NS1 RNA-binding domain"/>
    <property type="match status" value="1"/>
</dbReference>
<dbReference type="PROSITE" id="PS00362">
    <property type="entry name" value="RIBOSOMAL_S15"/>
    <property type="match status" value="1"/>
</dbReference>
<comment type="function">
    <text evidence="1">One of the primary rRNA binding proteins, it binds directly to 16S rRNA where it helps nucleate assembly of the platform of the 30S subunit by binding and bridging several RNA helices of the 16S rRNA.</text>
</comment>
<comment type="function">
    <text evidence="1">Forms an intersubunit bridge (bridge B4) with the 23S rRNA of the 50S subunit in the ribosome.</text>
</comment>
<comment type="subunit">
    <text evidence="1">Part of the 30S ribosomal subunit. Forms a bridge to the 50S subunit in the 70S ribosome, contacting the 23S rRNA.</text>
</comment>
<comment type="similarity">
    <text evidence="1">Belongs to the universal ribosomal protein uS15 family.</text>
</comment>
<name>RS15_NEIG1</name>
<reference key="1">
    <citation type="submission" date="2003-03" db="EMBL/GenBank/DDBJ databases">
        <title>The complete genome sequence of Neisseria gonorrhoeae.</title>
        <authorList>
            <person name="Lewis L.A."/>
            <person name="Gillaspy A.F."/>
            <person name="McLaughlin R.E."/>
            <person name="Gipson M."/>
            <person name="Ducey T.F."/>
            <person name="Ownbey T."/>
            <person name="Hartman K."/>
            <person name="Nydick C."/>
            <person name="Carson M.B."/>
            <person name="Vaughn J."/>
            <person name="Thomson C."/>
            <person name="Song L."/>
            <person name="Lin S."/>
            <person name="Yuan X."/>
            <person name="Najar F."/>
            <person name="Zhan M."/>
            <person name="Ren Q."/>
            <person name="Zhu H."/>
            <person name="Qi S."/>
            <person name="Kenton S.M."/>
            <person name="Lai H."/>
            <person name="White J.D."/>
            <person name="Clifton S."/>
            <person name="Roe B.A."/>
            <person name="Dyer D.W."/>
        </authorList>
    </citation>
    <scope>NUCLEOTIDE SEQUENCE [LARGE SCALE GENOMIC DNA]</scope>
    <source>
        <strain>ATCC 700825 / FA 1090</strain>
    </source>
</reference>
<evidence type="ECO:0000255" key="1">
    <source>
        <dbReference type="HAMAP-Rule" id="MF_01343"/>
    </source>
</evidence>
<evidence type="ECO:0000305" key="2"/>
<organism>
    <name type="scientific">Neisseria gonorrhoeae (strain ATCC 700825 / FA 1090)</name>
    <dbReference type="NCBI Taxonomy" id="242231"/>
    <lineage>
        <taxon>Bacteria</taxon>
        <taxon>Pseudomonadati</taxon>
        <taxon>Pseudomonadota</taxon>
        <taxon>Betaproteobacteria</taxon>
        <taxon>Neisseriales</taxon>
        <taxon>Neisseriaceae</taxon>
        <taxon>Neisseria</taxon>
    </lineage>
</organism>
<accession>Q5FA41</accession>